<feature type="chain" id="PRO_0000209816" description="Fatty acid-binding protein TM_1468">
    <location>
        <begin position="1"/>
        <end position="288"/>
    </location>
</feature>
<feature type="domain" description="DegV" evidence="1">
    <location>
        <begin position="3"/>
        <end position="283"/>
    </location>
</feature>
<feature type="binding site" evidence="2 5 6">
    <location>
        <position position="63"/>
    </location>
    <ligand>
        <name>hexadecanoate</name>
        <dbReference type="ChEBI" id="CHEBI:7896"/>
    </ligand>
</feature>
<feature type="binding site" evidence="2 5 6">
    <location>
        <position position="96"/>
    </location>
    <ligand>
        <name>hexadecanoate</name>
        <dbReference type="ChEBI" id="CHEBI:7896"/>
    </ligand>
</feature>
<feature type="strand" evidence="7">
    <location>
        <begin position="3"/>
        <end position="8"/>
    </location>
</feature>
<feature type="helix" evidence="7">
    <location>
        <begin position="9"/>
        <end position="11"/>
    </location>
</feature>
<feature type="helix" evidence="7">
    <location>
        <begin position="17"/>
        <end position="20"/>
    </location>
</feature>
<feature type="strand" evidence="7">
    <location>
        <begin position="23"/>
        <end position="26"/>
    </location>
</feature>
<feature type="strand" evidence="7">
    <location>
        <begin position="29"/>
        <end position="31"/>
    </location>
</feature>
<feature type="strand" evidence="7">
    <location>
        <begin position="37"/>
        <end position="39"/>
    </location>
</feature>
<feature type="helix" evidence="7">
    <location>
        <begin position="44"/>
        <end position="56"/>
    </location>
</feature>
<feature type="strand" evidence="7">
    <location>
        <begin position="62"/>
        <end position="64"/>
    </location>
</feature>
<feature type="helix" evidence="7">
    <location>
        <begin position="68"/>
        <end position="80"/>
    </location>
</feature>
<feature type="strand" evidence="7">
    <location>
        <begin position="84"/>
        <end position="91"/>
    </location>
</feature>
<feature type="turn" evidence="7">
    <location>
        <begin position="93"/>
        <end position="95"/>
    </location>
</feature>
<feature type="helix" evidence="7">
    <location>
        <begin position="98"/>
        <end position="108"/>
    </location>
</feature>
<feature type="strand" evidence="7">
    <location>
        <begin position="109"/>
        <end position="111"/>
    </location>
</feature>
<feature type="strand" evidence="7">
    <location>
        <begin position="113"/>
        <end position="117"/>
    </location>
</feature>
<feature type="helix" evidence="7">
    <location>
        <begin position="122"/>
        <end position="124"/>
    </location>
</feature>
<feature type="helix" evidence="7">
    <location>
        <begin position="126"/>
        <end position="137"/>
    </location>
</feature>
<feature type="helix" evidence="7">
    <location>
        <begin position="142"/>
        <end position="154"/>
    </location>
</feature>
<feature type="strand" evidence="7">
    <location>
        <begin position="158"/>
        <end position="165"/>
    </location>
</feature>
<feature type="helix" evidence="7">
    <location>
        <begin position="168"/>
        <end position="173"/>
    </location>
</feature>
<feature type="strand" evidence="7">
    <location>
        <begin position="189"/>
        <end position="196"/>
    </location>
</feature>
<feature type="strand" evidence="7">
    <location>
        <begin position="199"/>
        <end position="208"/>
    </location>
</feature>
<feature type="helix" evidence="7">
    <location>
        <begin position="209"/>
        <end position="221"/>
    </location>
</feature>
<feature type="strand" evidence="7">
    <location>
        <begin position="229"/>
        <end position="238"/>
    </location>
</feature>
<feature type="helix" evidence="7">
    <location>
        <begin position="240"/>
        <end position="250"/>
    </location>
</feature>
<feature type="turn" evidence="7">
    <location>
        <begin position="251"/>
        <end position="253"/>
    </location>
</feature>
<feature type="strand" evidence="7">
    <location>
        <begin position="254"/>
        <end position="263"/>
    </location>
</feature>
<feature type="helix" evidence="7">
    <location>
        <begin position="266"/>
        <end position="272"/>
    </location>
</feature>
<feature type="strand" evidence="7">
    <location>
        <begin position="277"/>
        <end position="284"/>
    </location>
</feature>
<reference key="1">
    <citation type="journal article" date="1999" name="Nature">
        <title>Evidence for lateral gene transfer between Archaea and Bacteria from genome sequence of Thermotoga maritima.</title>
        <authorList>
            <person name="Nelson K.E."/>
            <person name="Clayton R.A."/>
            <person name="Gill S.R."/>
            <person name="Gwinn M.L."/>
            <person name="Dodson R.J."/>
            <person name="Haft D.H."/>
            <person name="Hickey E.K."/>
            <person name="Peterson J.D."/>
            <person name="Nelson W.C."/>
            <person name="Ketchum K.A."/>
            <person name="McDonald L.A."/>
            <person name="Utterback T.R."/>
            <person name="Malek J.A."/>
            <person name="Linher K.D."/>
            <person name="Garrett M.M."/>
            <person name="Stewart A.M."/>
            <person name="Cotton M.D."/>
            <person name="Pratt M.S."/>
            <person name="Phillips C.A."/>
            <person name="Richardson D.L."/>
            <person name="Heidelberg J.F."/>
            <person name="Sutton G.G."/>
            <person name="Fleischmann R.D."/>
            <person name="Eisen J.A."/>
            <person name="White O."/>
            <person name="Salzberg S.L."/>
            <person name="Smith H.O."/>
            <person name="Venter J.C."/>
            <person name="Fraser C.M."/>
        </authorList>
    </citation>
    <scope>NUCLEOTIDE SEQUENCE [LARGE SCALE GENOMIC DNA]</scope>
    <source>
        <strain>ATCC 43589 / DSM 3109 / JCM 10099 / NBRC 100826 / MSB8</strain>
    </source>
</reference>
<reference evidence="5" key="2">
    <citation type="journal article" date="2003" name="Proteins">
        <title>Crystal structure of a hypothetical protein, TM841 of Thermotoga maritima, reveals its function as a fatty acid-binding protein.</title>
        <authorList>
            <person name="Schulze-Gahmen U."/>
            <person name="Pelaschier J."/>
            <person name="Yokota H."/>
            <person name="Kim R."/>
            <person name="Kim S.-H."/>
        </authorList>
    </citation>
    <scope>X-RAY CRYSTALLOGRAPHY (2.0 ANGSTROMS) IN COMPLEX WITH PALMITATE</scope>
    <scope>FUNCTION</scope>
    <scope>SUBUNIT</scope>
</reference>
<reference evidence="6" key="3">
    <citation type="submission" date="2004-11" db="PDB data bank">
        <title>Crystal structure of UPF0230 protein TM1468 (TM1468) from Thermotoga maritima at 2.45 A resolution.</title>
        <authorList>
            <consortium name="Joint center for structural genomics (JCSG)"/>
        </authorList>
    </citation>
    <scope>X-RAY CRYSTALLOGRAPHY (2.45 ANGSTROMS) IN COMPLEX WITH PALMITATE</scope>
</reference>
<evidence type="ECO:0000255" key="1">
    <source>
        <dbReference type="PROSITE-ProRule" id="PRU00815"/>
    </source>
</evidence>
<evidence type="ECO:0000269" key="2">
    <source>
    </source>
</evidence>
<evidence type="ECO:0000305" key="3">
    <source>
    </source>
</evidence>
<evidence type="ECO:0000305" key="4">
    <source ref="3"/>
</evidence>
<evidence type="ECO:0007744" key="5">
    <source>
        <dbReference type="PDB" id="1MGP"/>
    </source>
</evidence>
<evidence type="ECO:0007744" key="6">
    <source>
        <dbReference type="PDB" id="1VPV"/>
    </source>
</evidence>
<evidence type="ECO:0007829" key="7">
    <source>
        <dbReference type="PDB" id="1MGP"/>
    </source>
</evidence>
<protein>
    <recommendedName>
        <fullName>Fatty acid-binding protein TM_1468</fullName>
    </recommendedName>
</protein>
<keyword id="KW-0002">3D-structure</keyword>
<keyword id="KW-0446">Lipid-binding</keyword>
<keyword id="KW-1185">Reference proteome</keyword>
<proteinExistence type="evidence at protein level"/>
<name>Y1468_THEMA</name>
<organism>
    <name type="scientific">Thermotoga maritima (strain ATCC 43589 / DSM 3109 / JCM 10099 / NBRC 100826 / MSB8)</name>
    <dbReference type="NCBI Taxonomy" id="243274"/>
    <lineage>
        <taxon>Bacteria</taxon>
        <taxon>Thermotogati</taxon>
        <taxon>Thermotogota</taxon>
        <taxon>Thermotogae</taxon>
        <taxon>Thermotogales</taxon>
        <taxon>Thermotogaceae</taxon>
        <taxon>Thermotoga</taxon>
    </lineage>
</organism>
<gene>
    <name type="ordered locus">TM_1468</name>
</gene>
<dbReference type="EMBL" id="AE000512">
    <property type="protein sequence ID" value="AAD36536.1"/>
    <property type="molecule type" value="Genomic_DNA"/>
</dbReference>
<dbReference type="PIR" id="E72246">
    <property type="entry name" value="E72246"/>
</dbReference>
<dbReference type="RefSeq" id="NP_229268.1">
    <property type="nucleotide sequence ID" value="NC_000853.1"/>
</dbReference>
<dbReference type="RefSeq" id="WP_004081771.1">
    <property type="nucleotide sequence ID" value="NC_000853.1"/>
</dbReference>
<dbReference type="PDB" id="1MGP">
    <property type="method" value="X-ray"/>
    <property type="resolution" value="2.00 A"/>
    <property type="chains" value="A=1-288"/>
</dbReference>
<dbReference type="PDB" id="1VPV">
    <property type="method" value="X-ray"/>
    <property type="resolution" value="2.45 A"/>
    <property type="chains" value="A/B=1-288"/>
</dbReference>
<dbReference type="PDBsum" id="1MGP"/>
<dbReference type="PDBsum" id="1VPV"/>
<dbReference type="SMR" id="Q9X1H9"/>
<dbReference type="FunCoup" id="Q9X1H9">
    <property type="interactions" value="34"/>
</dbReference>
<dbReference type="STRING" id="243274.TM_1468"/>
<dbReference type="DrugBank" id="DB03796">
    <property type="generic name" value="Palmitic Acid"/>
</dbReference>
<dbReference type="PaxDb" id="243274-THEMA_06960"/>
<dbReference type="DNASU" id="897743"/>
<dbReference type="EnsemblBacteria" id="AAD36536">
    <property type="protein sequence ID" value="AAD36536"/>
    <property type="gene ID" value="TM_1468"/>
</dbReference>
<dbReference type="KEGG" id="tma:TM1468"/>
<dbReference type="KEGG" id="tmi:THEMA_06960"/>
<dbReference type="KEGG" id="tmm:Tmari_1476"/>
<dbReference type="KEGG" id="tmw:THMA_1500"/>
<dbReference type="eggNOG" id="COG1307">
    <property type="taxonomic scope" value="Bacteria"/>
</dbReference>
<dbReference type="InParanoid" id="Q9X1H9"/>
<dbReference type="OrthoDB" id="9780660at2"/>
<dbReference type="EvolutionaryTrace" id="Q9X1H9"/>
<dbReference type="Proteomes" id="UP000008183">
    <property type="component" value="Chromosome"/>
</dbReference>
<dbReference type="GO" id="GO:0008289">
    <property type="term" value="F:lipid binding"/>
    <property type="evidence" value="ECO:0007669"/>
    <property type="project" value="UniProtKB-KW"/>
</dbReference>
<dbReference type="Gene3D" id="3.30.1180.10">
    <property type="match status" value="1"/>
</dbReference>
<dbReference type="Gene3D" id="3.40.50.10170">
    <property type="match status" value="1"/>
</dbReference>
<dbReference type="InterPro" id="IPR003797">
    <property type="entry name" value="DegV"/>
</dbReference>
<dbReference type="InterPro" id="IPR043168">
    <property type="entry name" value="DegV_C"/>
</dbReference>
<dbReference type="InterPro" id="IPR050270">
    <property type="entry name" value="DegV_domain_contain"/>
</dbReference>
<dbReference type="NCBIfam" id="TIGR00762">
    <property type="entry name" value="DegV"/>
    <property type="match status" value="1"/>
</dbReference>
<dbReference type="PANTHER" id="PTHR33434">
    <property type="entry name" value="DEGV DOMAIN-CONTAINING PROTEIN DR_1986-RELATED"/>
    <property type="match status" value="1"/>
</dbReference>
<dbReference type="PANTHER" id="PTHR33434:SF2">
    <property type="entry name" value="FATTY ACID-BINDING PROTEIN TM_1468"/>
    <property type="match status" value="1"/>
</dbReference>
<dbReference type="Pfam" id="PF02645">
    <property type="entry name" value="DegV"/>
    <property type="match status" value="1"/>
</dbReference>
<dbReference type="SUPFAM" id="SSF82549">
    <property type="entry name" value="DAK1/DegV-like"/>
    <property type="match status" value="1"/>
</dbReference>
<dbReference type="PROSITE" id="PS51482">
    <property type="entry name" value="DEGV"/>
    <property type="match status" value="1"/>
</dbReference>
<accession>Q9X1H9</accession>
<comment type="function">
    <text evidence="2">Binds long-chain fatty acids, such as palmitate, and may play a role in lipid transport or fatty acid metabolism.</text>
</comment>
<comment type="subunit">
    <text evidence="3 4">Monomer.</text>
</comment>
<sequence>MKVKILVDSTADVPFSWMEKYDIDSIPLYVVWEDGRSEPDEREPEEIMNFYKRIREAGSVPKTSQPSVEDFKKRYLKYKEEDYDVVLVLTLSSKLSGTYNSAVLASKEVDIPVYVVDTLLASGAIPLPARVAREMLENGATIEEVLKKLDERMKNKDFKAIFYVSNFDYLVKGGRVSKFQGFVGNLLKIRVCLHIENGELIPYRKVRGDKKAIEALIEKLREDTPEGSKLRVIGVHADNEAGVVELLNTLRKSYEVVDEIISPMGKVITTHVGPGTVGFGIEVLERKR</sequence>